<reference key="1">
    <citation type="submission" date="2010-03" db="EMBL/GenBank/DDBJ databases">
        <title>The complete genome of Methanohalophilus mahii DSM 5219.</title>
        <authorList>
            <consortium name="US DOE Joint Genome Institute (JGI-PGF)"/>
            <person name="Lucas S."/>
            <person name="Copeland A."/>
            <person name="Lapidus A."/>
            <person name="Glavina del Rio T."/>
            <person name="Dalin E."/>
            <person name="Tice H."/>
            <person name="Bruce D."/>
            <person name="Goodwin L."/>
            <person name="Pitluck S."/>
            <person name="Kyrpides N."/>
            <person name="Mavromatis K."/>
            <person name="Ivanova N."/>
            <person name="Lykidis A."/>
            <person name="Saunders E."/>
            <person name="Brettin T."/>
            <person name="Detter J.C."/>
            <person name="Han C."/>
            <person name="Land M."/>
            <person name="Hauser L."/>
            <person name="Markowitz V."/>
            <person name="Cheng J.-F."/>
            <person name="Hugenholtz P."/>
            <person name="Woyke T."/>
            <person name="Wu D."/>
            <person name="Spring S."/>
            <person name="Schneider S."/>
            <person name="Schroeder M."/>
            <person name="Klenk H.-P."/>
            <person name="Eisen J.A."/>
        </authorList>
    </citation>
    <scope>NUCLEOTIDE SEQUENCE [LARGE SCALE GENOMIC DNA]</scope>
    <source>
        <strain>ATCC 35705 / DSM 5219 / SLP</strain>
    </source>
</reference>
<protein>
    <recommendedName>
        <fullName evidence="1">Tetrahydromethanopterin S-methyltransferase subunit A</fullName>
        <ecNumber evidence="1">7.2.1.4</ecNumber>
    </recommendedName>
    <alternativeName>
        <fullName evidence="1">N5-methyltetrahydromethanopterin--coenzyme M methyltransferase subunit A</fullName>
    </alternativeName>
</protein>
<dbReference type="EC" id="7.2.1.4" evidence="1"/>
<dbReference type="EMBL" id="CP001994">
    <property type="protein sequence ID" value="ADE37275.1"/>
    <property type="molecule type" value="Genomic_DNA"/>
</dbReference>
<dbReference type="RefSeq" id="WP_013038217.1">
    <property type="nucleotide sequence ID" value="NC_014002.1"/>
</dbReference>
<dbReference type="SMR" id="D5E7Y7"/>
<dbReference type="STRING" id="547558.Mmah_1780"/>
<dbReference type="GeneID" id="8983963"/>
<dbReference type="KEGG" id="mmh:Mmah_1780"/>
<dbReference type="HOGENOM" id="CLU_100863_0_0_2"/>
<dbReference type="OrthoDB" id="130682at2157"/>
<dbReference type="UniPathway" id="UPA00640">
    <property type="reaction ID" value="UER00698"/>
</dbReference>
<dbReference type="Proteomes" id="UP000001059">
    <property type="component" value="Chromosome"/>
</dbReference>
<dbReference type="GO" id="GO:0005886">
    <property type="term" value="C:plasma membrane"/>
    <property type="evidence" value="ECO:0007669"/>
    <property type="project" value="UniProtKB-SubCell"/>
</dbReference>
<dbReference type="GO" id="GO:0050897">
    <property type="term" value="F:cobalt ion binding"/>
    <property type="evidence" value="ECO:0007669"/>
    <property type="project" value="InterPro"/>
</dbReference>
<dbReference type="GO" id="GO:0030269">
    <property type="term" value="F:tetrahydromethanopterin S-methyltransferase activity"/>
    <property type="evidence" value="ECO:0007669"/>
    <property type="project" value="UniProtKB-UniRule"/>
</dbReference>
<dbReference type="GO" id="GO:0019386">
    <property type="term" value="P:methanogenesis, from carbon dioxide"/>
    <property type="evidence" value="ECO:0007669"/>
    <property type="project" value="UniProtKB-UniRule"/>
</dbReference>
<dbReference type="GO" id="GO:0032259">
    <property type="term" value="P:methylation"/>
    <property type="evidence" value="ECO:0007669"/>
    <property type="project" value="UniProtKB-KW"/>
</dbReference>
<dbReference type="GO" id="GO:0006730">
    <property type="term" value="P:one-carbon metabolic process"/>
    <property type="evidence" value="ECO:0007669"/>
    <property type="project" value="UniProtKB-UniRule"/>
</dbReference>
<dbReference type="HAMAP" id="MF_01093">
    <property type="entry name" value="MtrA"/>
    <property type="match status" value="1"/>
</dbReference>
<dbReference type="InterPro" id="IPR030688">
    <property type="entry name" value="MeTrfase_MtrA/MtxA"/>
</dbReference>
<dbReference type="InterPro" id="IPR005778">
    <property type="entry name" value="MtrA"/>
</dbReference>
<dbReference type="NCBIfam" id="TIGR01111">
    <property type="entry name" value="mtrA"/>
    <property type="match status" value="1"/>
</dbReference>
<dbReference type="NCBIfam" id="NF002126">
    <property type="entry name" value="PRK00964.1-4"/>
    <property type="match status" value="1"/>
</dbReference>
<dbReference type="Pfam" id="PF04208">
    <property type="entry name" value="MtrA"/>
    <property type="match status" value="1"/>
</dbReference>
<dbReference type="PIRSF" id="PIRSF500207">
    <property type="entry name" value="MtrA"/>
    <property type="match status" value="1"/>
</dbReference>
<dbReference type="PIRSF" id="PIRSF009452">
    <property type="entry name" value="MtrA_MtxA"/>
    <property type="match status" value="1"/>
</dbReference>
<evidence type="ECO:0000255" key="1">
    <source>
        <dbReference type="HAMAP-Rule" id="MF_01093"/>
    </source>
</evidence>
<proteinExistence type="inferred from homology"/>
<comment type="function">
    <text evidence="1">Part of a complex that catalyzes the formation of methyl-coenzyme M and tetrahydromethanopterin from coenzyme M and methyl-tetrahydromethanopterin. This is an energy-conserving, sodium-ion translocating step.</text>
</comment>
<comment type="catalytic activity">
    <reaction evidence="1">
        <text>5-methyl-5,6,7,8-tetrahydromethanopterin + coenzyme M + 2 Na(+)(in) = 5,6,7,8-tetrahydromethanopterin + methyl-coenzyme M + 2 Na(+)(out)</text>
        <dbReference type="Rhea" id="RHEA:53492"/>
        <dbReference type="ChEBI" id="CHEBI:29101"/>
        <dbReference type="ChEBI" id="CHEBI:58103"/>
        <dbReference type="ChEBI" id="CHEBI:58116"/>
        <dbReference type="ChEBI" id="CHEBI:58286"/>
        <dbReference type="ChEBI" id="CHEBI:58319"/>
        <dbReference type="EC" id="7.2.1.4"/>
    </reaction>
</comment>
<comment type="cofactor">
    <cofactor evidence="1">
        <name>5-hydroxybenzimidazolylcob(I)amide</name>
        <dbReference type="ChEBI" id="CHEBI:60494"/>
    </cofactor>
    <text evidence="1">Binds 1 5-hydroxybenzimidazolylcobamide group.</text>
</comment>
<comment type="pathway">
    <text evidence="1">One-carbon metabolism; methanogenesis from CO(2); methyl-coenzyme M from 5,10-methylene-5,6,7,8-tetrahydromethanopterin: step 2/2.</text>
</comment>
<comment type="subunit">
    <text evidence="1">The complex is composed of 8 subunits; MtrA, MtrB, MtrC, MtrD, MtrE, MtrF, MtrG and MtrH.</text>
</comment>
<comment type="subcellular location">
    <subcellularLocation>
        <location evidence="1">Cell membrane</location>
        <topology evidence="1">Single-pass membrane protein</topology>
    </subcellularLocation>
</comment>
<comment type="similarity">
    <text evidence="1">Belongs to the MtrA family.</text>
</comment>
<name>MTRA_METMS</name>
<accession>D5E7Y7</accession>
<keyword id="KW-1003">Cell membrane</keyword>
<keyword id="KW-0170">Cobalt</keyword>
<keyword id="KW-0472">Membrane</keyword>
<keyword id="KW-0484">Methanogenesis</keyword>
<keyword id="KW-0489">Methyltransferase</keyword>
<keyword id="KW-0554">One-carbon metabolism</keyword>
<keyword id="KW-1185">Reference proteome</keyword>
<keyword id="KW-0808">Transferase</keyword>
<keyword id="KW-1278">Translocase</keyword>
<keyword id="KW-0812">Transmembrane</keyword>
<keyword id="KW-1133">Transmembrane helix</keyword>
<gene>
    <name evidence="1" type="primary">mtrA</name>
    <name type="ordered locus">Mmah_1780</name>
</gene>
<sequence>MAEKREPAAGWPILKGEYDVGDPENCVAVITLGSHLDGGPMLEAGASITGPCKTENLGLEKVVSHIIANPNIRYLVVTGSEVKGHITGEAFIMLHKNGVSDNRIVNASGAIPYVENLTEEAVQRYQEQIECIDLIGTEDMGTISSKIKELAAKDPDAFDADPLVIEVGGEAEEEEEVGGLKPMASEISVIRGRILDIEREMARIGEFNKFHAGVHAGKFEGIMIGLAITLSLLGLILFGR</sequence>
<organism>
    <name type="scientific">Methanohalophilus mahii (strain ATCC 35705 / DSM 5219 / SLP)</name>
    <dbReference type="NCBI Taxonomy" id="547558"/>
    <lineage>
        <taxon>Archaea</taxon>
        <taxon>Methanobacteriati</taxon>
        <taxon>Methanobacteriota</taxon>
        <taxon>Stenosarchaea group</taxon>
        <taxon>Methanomicrobia</taxon>
        <taxon>Methanosarcinales</taxon>
        <taxon>Methanosarcinaceae</taxon>
        <taxon>Methanohalophilus</taxon>
    </lineage>
</organism>
<feature type="chain" id="PRO_0000403066" description="Tetrahydromethanopterin S-methyltransferase subunit A">
    <location>
        <begin position="1"/>
        <end position="240"/>
    </location>
</feature>
<feature type="topological domain" description="Cytoplasmic" evidence="1">
    <location>
        <begin position="1"/>
        <end position="218"/>
    </location>
</feature>
<feature type="transmembrane region" description="Helical" evidence="1">
    <location>
        <begin position="219"/>
        <end position="239"/>
    </location>
</feature>
<feature type="topological domain" description="Extracellular" evidence="1">
    <location>
        <position position="240"/>
    </location>
</feature>
<feature type="binding site" evidence="1">
    <location>
        <position position="85"/>
    </location>
    <ligand>
        <name>5-hydroxybenzimidazolylcob(I)amide</name>
        <dbReference type="ChEBI" id="CHEBI:60494"/>
        <note>cofactor</note>
    </ligand>
</feature>